<feature type="propeptide" id="PRO_0000021713" evidence="2">
    <location>
        <begin position="1"/>
        <end position="29"/>
    </location>
</feature>
<feature type="peptide" id="PRO_0000021714" description="M-factor">
    <location>
        <begin position="30"/>
        <end position="38"/>
    </location>
</feature>
<feature type="propeptide" id="PRO_0000021715" description="Removed in mature form">
    <location>
        <begin position="39"/>
        <end position="41"/>
    </location>
</feature>
<feature type="region of interest" description="Disordered" evidence="1">
    <location>
        <begin position="1"/>
        <end position="25"/>
    </location>
</feature>
<feature type="modified residue" description="Cysteine methyl ester" evidence="2">
    <location>
        <position position="38"/>
    </location>
</feature>
<feature type="lipid moiety-binding region" description="S-farnesyl cysteine" evidence="2 3">
    <location>
        <position position="38"/>
    </location>
</feature>
<accession>P40849</accession>
<gene>
    <name type="primary">mfm3</name>
    <name type="ORF">SPBPJ4664.03</name>
</gene>
<dbReference type="EMBL" id="S69926">
    <property type="protein sequence ID" value="AAB30833.1"/>
    <property type="molecule type" value="Genomic_DNA"/>
</dbReference>
<dbReference type="EMBL" id="AB004296">
    <property type="protein sequence ID" value="BAA20362.1"/>
    <property type="molecule type" value="mRNA"/>
</dbReference>
<dbReference type="EMBL" id="CU329671">
    <property type="protein sequence ID" value="CAC38348.1"/>
    <property type="molecule type" value="Genomic_DNA"/>
</dbReference>
<dbReference type="PIR" id="A56061">
    <property type="entry name" value="A56061"/>
</dbReference>
<dbReference type="RefSeq" id="NP_595278.1">
    <property type="nucleotide sequence ID" value="NM_001021185.2"/>
</dbReference>
<dbReference type="BioGRID" id="277863">
    <property type="interactions" value="13"/>
</dbReference>
<dbReference type="STRING" id="284812.P40849"/>
<dbReference type="PaxDb" id="4896-SPBPJ4664.03.1"/>
<dbReference type="EnsemblFungi" id="SPBPJ4664.03.1">
    <property type="protein sequence ID" value="SPBPJ4664.03.1:pep"/>
    <property type="gene ID" value="SPBPJ4664.03"/>
</dbReference>
<dbReference type="GeneID" id="2541352"/>
<dbReference type="KEGG" id="spo:2541352"/>
<dbReference type="PomBase" id="SPBPJ4664.03">
    <property type="gene designation" value="mfm3"/>
</dbReference>
<dbReference type="VEuPathDB" id="FungiDB:SPBPJ4664.03"/>
<dbReference type="HOGENOM" id="CLU_3260799_0_0_1"/>
<dbReference type="InParanoid" id="P40849"/>
<dbReference type="PhylomeDB" id="P40849"/>
<dbReference type="PRO" id="PR:P40849"/>
<dbReference type="Proteomes" id="UP000002485">
    <property type="component" value="Chromosome II"/>
</dbReference>
<dbReference type="GO" id="GO:0005576">
    <property type="term" value="C:extracellular region"/>
    <property type="evidence" value="ECO:0000250"/>
    <property type="project" value="PomBase"/>
</dbReference>
<dbReference type="GO" id="GO:0000772">
    <property type="term" value="F:mating pheromone activity"/>
    <property type="evidence" value="ECO:0000315"/>
    <property type="project" value="PomBase"/>
</dbReference>
<dbReference type="GO" id="GO:0007267">
    <property type="term" value="P:cell-cell signaling"/>
    <property type="evidence" value="ECO:0000315"/>
    <property type="project" value="PomBase"/>
</dbReference>
<dbReference type="GO" id="GO:0062038">
    <property type="term" value="P:positive regulation of pheromone response MAPK cascade"/>
    <property type="evidence" value="ECO:0000314"/>
    <property type="project" value="PomBase"/>
</dbReference>
<dbReference type="GO" id="GO:0032005">
    <property type="term" value="P:signal transduction involved in positive regulation of conjugation with cellular fusion"/>
    <property type="evidence" value="ECO:0000303"/>
    <property type="project" value="PomBase"/>
</dbReference>
<dbReference type="InterPro" id="IPR005555">
    <property type="entry name" value="M-factor"/>
</dbReference>
<dbReference type="Pfam" id="PF03855">
    <property type="entry name" value="M-factor"/>
    <property type="match status" value="1"/>
</dbReference>
<comment type="function">
    <text>M-factor is a mating pheromone produced by M-type mating cells. All three mfm genes contribute to the production of M-factor.</text>
</comment>
<comment type="subcellular location">
    <subcellularLocation>
        <location evidence="4">Secreted</location>
    </subcellularLocation>
</comment>
<comment type="induction">
    <text>By nitrogen starvation. It is further induced by a pheromone signal. Its transcription is limited to M cells.</text>
</comment>
<sequence>MDSMANTVSSSVVNTGNKPSETLNKTVKNYTPKVPYMCVIA</sequence>
<reference key="1">
    <citation type="journal article" date="1994" name="Mol. Cell. Biol.">
        <title>Analysis of the structural genes encoding M-factor in the fission yeast Schizosaccharomyces pombe: identification of a third gene, mfm3.</title>
        <authorList>
            <person name="Kjaerulff S."/>
            <person name="Davey J."/>
            <person name="Nielsen O."/>
        </authorList>
    </citation>
    <scope>NUCLEOTIDE SEQUENCE [GENOMIC DNA]</scope>
</reference>
<reference key="2">
    <citation type="submission" date="1997-06" db="EMBL/GenBank/DDBJ databases">
        <title>S.pombe cDNA for mfm3.</title>
        <authorList>
            <person name="Kawamukai M."/>
            <person name="Sen K."/>
            <person name="Ozoe F."/>
            <person name="Omae M."/>
        </authorList>
    </citation>
    <scope>NUCLEOTIDE SEQUENCE [MRNA]</scope>
</reference>
<reference key="3">
    <citation type="journal article" date="2002" name="Nature">
        <title>The genome sequence of Schizosaccharomyces pombe.</title>
        <authorList>
            <person name="Wood V."/>
            <person name="Gwilliam R."/>
            <person name="Rajandream M.A."/>
            <person name="Lyne M.H."/>
            <person name="Lyne R."/>
            <person name="Stewart A."/>
            <person name="Sgouros J.G."/>
            <person name="Peat N."/>
            <person name="Hayles J."/>
            <person name="Baker S.G."/>
            <person name="Basham D."/>
            <person name="Bowman S."/>
            <person name="Brooks K."/>
            <person name="Brown D."/>
            <person name="Brown S."/>
            <person name="Chillingworth T."/>
            <person name="Churcher C.M."/>
            <person name="Collins M."/>
            <person name="Connor R."/>
            <person name="Cronin A."/>
            <person name="Davis P."/>
            <person name="Feltwell T."/>
            <person name="Fraser A."/>
            <person name="Gentles S."/>
            <person name="Goble A."/>
            <person name="Hamlin N."/>
            <person name="Harris D.E."/>
            <person name="Hidalgo J."/>
            <person name="Hodgson G."/>
            <person name="Holroyd S."/>
            <person name="Hornsby T."/>
            <person name="Howarth S."/>
            <person name="Huckle E.J."/>
            <person name="Hunt S."/>
            <person name="Jagels K."/>
            <person name="James K.D."/>
            <person name="Jones L."/>
            <person name="Jones M."/>
            <person name="Leather S."/>
            <person name="McDonald S."/>
            <person name="McLean J."/>
            <person name="Mooney P."/>
            <person name="Moule S."/>
            <person name="Mungall K.L."/>
            <person name="Murphy L.D."/>
            <person name="Niblett D."/>
            <person name="Odell C."/>
            <person name="Oliver K."/>
            <person name="O'Neil S."/>
            <person name="Pearson D."/>
            <person name="Quail M.A."/>
            <person name="Rabbinowitsch E."/>
            <person name="Rutherford K.M."/>
            <person name="Rutter S."/>
            <person name="Saunders D."/>
            <person name="Seeger K."/>
            <person name="Sharp S."/>
            <person name="Skelton J."/>
            <person name="Simmonds M.N."/>
            <person name="Squares R."/>
            <person name="Squares S."/>
            <person name="Stevens K."/>
            <person name="Taylor K."/>
            <person name="Taylor R.G."/>
            <person name="Tivey A."/>
            <person name="Walsh S.V."/>
            <person name="Warren T."/>
            <person name="Whitehead S."/>
            <person name="Woodward J.R."/>
            <person name="Volckaert G."/>
            <person name="Aert R."/>
            <person name="Robben J."/>
            <person name="Grymonprez B."/>
            <person name="Weltjens I."/>
            <person name="Vanstreels E."/>
            <person name="Rieger M."/>
            <person name="Schaefer M."/>
            <person name="Mueller-Auer S."/>
            <person name="Gabel C."/>
            <person name="Fuchs M."/>
            <person name="Duesterhoeft A."/>
            <person name="Fritzc C."/>
            <person name="Holzer E."/>
            <person name="Moestl D."/>
            <person name="Hilbert H."/>
            <person name="Borzym K."/>
            <person name="Langer I."/>
            <person name="Beck A."/>
            <person name="Lehrach H."/>
            <person name="Reinhardt R."/>
            <person name="Pohl T.M."/>
            <person name="Eger P."/>
            <person name="Zimmermann W."/>
            <person name="Wedler H."/>
            <person name="Wambutt R."/>
            <person name="Purnelle B."/>
            <person name="Goffeau A."/>
            <person name="Cadieu E."/>
            <person name="Dreano S."/>
            <person name="Gloux S."/>
            <person name="Lelaure V."/>
            <person name="Mottier S."/>
            <person name="Galibert F."/>
            <person name="Aves S.J."/>
            <person name="Xiang Z."/>
            <person name="Hunt C."/>
            <person name="Moore K."/>
            <person name="Hurst S.M."/>
            <person name="Lucas M."/>
            <person name="Rochet M."/>
            <person name="Gaillardin C."/>
            <person name="Tallada V.A."/>
            <person name="Garzon A."/>
            <person name="Thode G."/>
            <person name="Daga R.R."/>
            <person name="Cruzado L."/>
            <person name="Jimenez J."/>
            <person name="Sanchez M."/>
            <person name="del Rey F."/>
            <person name="Benito J."/>
            <person name="Dominguez A."/>
            <person name="Revuelta J.L."/>
            <person name="Moreno S."/>
            <person name="Armstrong J."/>
            <person name="Forsburg S.L."/>
            <person name="Cerutti L."/>
            <person name="Lowe T."/>
            <person name="McCombie W.R."/>
            <person name="Paulsen I."/>
            <person name="Potashkin J."/>
            <person name="Shpakovski G.V."/>
            <person name="Ussery D."/>
            <person name="Barrell B.G."/>
            <person name="Nurse P."/>
        </authorList>
    </citation>
    <scope>NUCLEOTIDE SEQUENCE [LARGE SCALE GENOMIC DNA]</scope>
    <source>
        <strain>972 / ATCC 24843</strain>
    </source>
</reference>
<reference key="4">
    <citation type="journal article" date="1992" name="EMBO J.">
        <title>Mating pheromones of the fission yeast Schizosaccharomyces pombe: purification and structural characterization of M-factor and isolation and analysis of two genes encoding the pheromone.</title>
        <authorList>
            <person name="Davey J."/>
        </authorList>
    </citation>
    <scope>PROTEIN SEQUENCE OF 30-38</scope>
    <scope>ISOPRENYLATION AT CYS-38</scope>
    <scope>METHYLATION AT CYS-38</scope>
</reference>
<evidence type="ECO:0000256" key="1">
    <source>
        <dbReference type="SAM" id="MobiDB-lite"/>
    </source>
</evidence>
<evidence type="ECO:0000269" key="2">
    <source>
    </source>
</evidence>
<evidence type="ECO:0000269" key="3">
    <source>
    </source>
</evidence>
<evidence type="ECO:0000305" key="4"/>
<organism>
    <name type="scientific">Schizosaccharomyces pombe (strain 972 / ATCC 24843)</name>
    <name type="common">Fission yeast</name>
    <dbReference type="NCBI Taxonomy" id="284812"/>
    <lineage>
        <taxon>Eukaryota</taxon>
        <taxon>Fungi</taxon>
        <taxon>Dikarya</taxon>
        <taxon>Ascomycota</taxon>
        <taxon>Taphrinomycotina</taxon>
        <taxon>Schizosaccharomycetes</taxon>
        <taxon>Schizosaccharomycetales</taxon>
        <taxon>Schizosaccharomycetaceae</taxon>
        <taxon>Schizosaccharomyces</taxon>
    </lineage>
</organism>
<name>MFM3_SCHPO</name>
<keyword id="KW-0903">Direct protein sequencing</keyword>
<keyword id="KW-0449">Lipoprotein</keyword>
<keyword id="KW-0488">Methylation</keyword>
<keyword id="KW-0588">Pheromone</keyword>
<keyword id="KW-0636">Prenylation</keyword>
<keyword id="KW-1185">Reference proteome</keyword>
<keyword id="KW-0964">Secreted</keyword>
<keyword id="KW-0346">Stress response</keyword>
<protein>
    <recommendedName>
        <fullName>M-factor</fullName>
    </recommendedName>
</protein>
<proteinExistence type="evidence at protein level"/>